<dbReference type="EC" id="3.6.1.27" evidence="1"/>
<dbReference type="EMBL" id="FM211187">
    <property type="protein sequence ID" value="CAR68277.1"/>
    <property type="molecule type" value="Genomic_DNA"/>
</dbReference>
<dbReference type="RefSeq" id="WP_000280773.1">
    <property type="nucleotide sequence ID" value="NC_011900.1"/>
</dbReference>
<dbReference type="SMR" id="B8ZLV4"/>
<dbReference type="KEGG" id="sne:SPN23F04300"/>
<dbReference type="HOGENOM" id="CLU_060296_2_0_9"/>
<dbReference type="GO" id="GO:0005886">
    <property type="term" value="C:plasma membrane"/>
    <property type="evidence" value="ECO:0007669"/>
    <property type="project" value="UniProtKB-SubCell"/>
</dbReference>
<dbReference type="GO" id="GO:0050380">
    <property type="term" value="F:undecaprenyl-diphosphatase activity"/>
    <property type="evidence" value="ECO:0007669"/>
    <property type="project" value="UniProtKB-UniRule"/>
</dbReference>
<dbReference type="GO" id="GO:0071555">
    <property type="term" value="P:cell wall organization"/>
    <property type="evidence" value="ECO:0007669"/>
    <property type="project" value="UniProtKB-KW"/>
</dbReference>
<dbReference type="GO" id="GO:0009252">
    <property type="term" value="P:peptidoglycan biosynthetic process"/>
    <property type="evidence" value="ECO:0007669"/>
    <property type="project" value="UniProtKB-KW"/>
</dbReference>
<dbReference type="GO" id="GO:0008360">
    <property type="term" value="P:regulation of cell shape"/>
    <property type="evidence" value="ECO:0007669"/>
    <property type="project" value="UniProtKB-KW"/>
</dbReference>
<dbReference type="GO" id="GO:0046677">
    <property type="term" value="P:response to antibiotic"/>
    <property type="evidence" value="ECO:0007669"/>
    <property type="project" value="UniProtKB-UniRule"/>
</dbReference>
<dbReference type="HAMAP" id="MF_01006">
    <property type="entry name" value="Undec_diphosphatase"/>
    <property type="match status" value="1"/>
</dbReference>
<dbReference type="InterPro" id="IPR003824">
    <property type="entry name" value="UppP"/>
</dbReference>
<dbReference type="NCBIfam" id="NF001391">
    <property type="entry name" value="PRK00281.1-5"/>
    <property type="match status" value="1"/>
</dbReference>
<dbReference type="PANTHER" id="PTHR30622">
    <property type="entry name" value="UNDECAPRENYL-DIPHOSPHATASE"/>
    <property type="match status" value="1"/>
</dbReference>
<dbReference type="PANTHER" id="PTHR30622:SF3">
    <property type="entry name" value="UNDECAPRENYL-DIPHOSPHATASE"/>
    <property type="match status" value="1"/>
</dbReference>
<dbReference type="Pfam" id="PF02673">
    <property type="entry name" value="BacA"/>
    <property type="match status" value="1"/>
</dbReference>
<reference key="1">
    <citation type="journal article" date="2009" name="J. Bacteriol.">
        <title>Role of conjugative elements in the evolution of the multidrug-resistant pandemic clone Streptococcus pneumoniae Spain23F ST81.</title>
        <authorList>
            <person name="Croucher N.J."/>
            <person name="Walker D."/>
            <person name="Romero P."/>
            <person name="Lennard N."/>
            <person name="Paterson G.K."/>
            <person name="Bason N.C."/>
            <person name="Mitchell A.M."/>
            <person name="Quail M.A."/>
            <person name="Andrew P.W."/>
            <person name="Parkhill J."/>
            <person name="Bentley S.D."/>
            <person name="Mitchell T.J."/>
        </authorList>
    </citation>
    <scope>NUCLEOTIDE SEQUENCE [LARGE SCALE GENOMIC DNA]</scope>
    <source>
        <strain>ATCC 700669 / Spain 23F-1</strain>
    </source>
</reference>
<comment type="function">
    <text evidence="1">Catalyzes the dephosphorylation of undecaprenyl diphosphate (UPP). Confers resistance to bacitracin.</text>
</comment>
<comment type="catalytic activity">
    <reaction evidence="1">
        <text>di-trans,octa-cis-undecaprenyl diphosphate + H2O = di-trans,octa-cis-undecaprenyl phosphate + phosphate + H(+)</text>
        <dbReference type="Rhea" id="RHEA:28094"/>
        <dbReference type="ChEBI" id="CHEBI:15377"/>
        <dbReference type="ChEBI" id="CHEBI:15378"/>
        <dbReference type="ChEBI" id="CHEBI:43474"/>
        <dbReference type="ChEBI" id="CHEBI:58405"/>
        <dbReference type="ChEBI" id="CHEBI:60392"/>
        <dbReference type="EC" id="3.6.1.27"/>
    </reaction>
</comment>
<comment type="subcellular location">
    <subcellularLocation>
        <location evidence="1">Cell membrane</location>
        <topology evidence="1">Multi-pass membrane protein</topology>
    </subcellularLocation>
</comment>
<comment type="miscellaneous">
    <text>Bacitracin is thought to be involved in the inhibition of peptidoglycan synthesis by sequestering undecaprenyl diphosphate, thereby reducing the pool of lipid carrier available.</text>
</comment>
<comment type="similarity">
    <text evidence="1">Belongs to the UppP family.</text>
</comment>
<protein>
    <recommendedName>
        <fullName evidence="1">Undecaprenyl-diphosphatase</fullName>
        <ecNumber evidence="1">3.6.1.27</ecNumber>
    </recommendedName>
    <alternativeName>
        <fullName evidence="1">Bacitracin resistance protein</fullName>
    </alternativeName>
    <alternativeName>
        <fullName evidence="1">Undecaprenyl pyrophosphate phosphatase</fullName>
    </alternativeName>
</protein>
<name>UPPP_STRPJ</name>
<keyword id="KW-0046">Antibiotic resistance</keyword>
<keyword id="KW-1003">Cell membrane</keyword>
<keyword id="KW-0133">Cell shape</keyword>
<keyword id="KW-0961">Cell wall biogenesis/degradation</keyword>
<keyword id="KW-0378">Hydrolase</keyword>
<keyword id="KW-0472">Membrane</keyword>
<keyword id="KW-0573">Peptidoglycan synthesis</keyword>
<keyword id="KW-0812">Transmembrane</keyword>
<keyword id="KW-1133">Transmembrane helix</keyword>
<gene>
    <name evidence="1" type="primary">uppP</name>
    <name type="ordered locus">SPN23F04300</name>
</gene>
<sequence length="281" mass="31810">MYLIEILKSIFFGIVEGITEWLPISSTGHLILAEEFIQYQNQNEAFMSMFNVVIQLGAILAVMVIYFNKLNPFKPTKDKQEVRKTWRLWLKVLIATLPLLGVFKFDDWFDTHFHNMVSVALMLIIYGVAFIYLEKRNKARAIEPSVTELDKLPYTTAFYIGLFQVLALLPGTSRSGATIVGGLLNGTSRSVVTEFTFYLGIPVMFGASALKIFKFVKAGELLSFGQLFLLLVAMGVAFAVSMVAIRFLTSYVKKHDFTLFGKYRIVLGSVLLLYSFVRLFV</sequence>
<organism>
    <name type="scientific">Streptococcus pneumoniae (strain ATCC 700669 / Spain 23F-1)</name>
    <dbReference type="NCBI Taxonomy" id="561276"/>
    <lineage>
        <taxon>Bacteria</taxon>
        <taxon>Bacillati</taxon>
        <taxon>Bacillota</taxon>
        <taxon>Bacilli</taxon>
        <taxon>Lactobacillales</taxon>
        <taxon>Streptococcaceae</taxon>
        <taxon>Streptococcus</taxon>
    </lineage>
</organism>
<accession>B8ZLV4</accession>
<evidence type="ECO:0000255" key="1">
    <source>
        <dbReference type="HAMAP-Rule" id="MF_01006"/>
    </source>
</evidence>
<proteinExistence type="inferred from homology"/>
<feature type="chain" id="PRO_1000148829" description="Undecaprenyl-diphosphatase">
    <location>
        <begin position="1"/>
        <end position="281"/>
    </location>
</feature>
<feature type="transmembrane region" description="Helical" evidence="1">
    <location>
        <begin position="4"/>
        <end position="24"/>
    </location>
</feature>
<feature type="transmembrane region" description="Helical" evidence="1">
    <location>
        <begin position="45"/>
        <end position="65"/>
    </location>
</feature>
<feature type="transmembrane region" description="Helical" evidence="1">
    <location>
        <begin position="89"/>
        <end position="109"/>
    </location>
</feature>
<feature type="transmembrane region" description="Helical" evidence="1">
    <location>
        <begin position="113"/>
        <end position="133"/>
    </location>
</feature>
<feature type="transmembrane region" description="Helical" evidence="1">
    <location>
        <begin position="152"/>
        <end position="172"/>
    </location>
</feature>
<feature type="transmembrane region" description="Helical" evidence="1">
    <location>
        <begin position="190"/>
        <end position="210"/>
    </location>
</feature>
<feature type="transmembrane region" description="Helical" evidence="1">
    <location>
        <begin position="225"/>
        <end position="245"/>
    </location>
</feature>
<feature type="transmembrane region" description="Helical" evidence="1">
    <location>
        <begin position="257"/>
        <end position="277"/>
    </location>
</feature>